<feature type="chain" id="PRO_0000092140" description="Putative ABC transporter ATP-binding protein MA_4342">
    <location>
        <begin position="1"/>
        <end position="283"/>
    </location>
</feature>
<feature type="domain" description="ABC transporter" evidence="2">
    <location>
        <begin position="3"/>
        <end position="238"/>
    </location>
</feature>
<feature type="binding site" evidence="2">
    <location>
        <begin position="40"/>
        <end position="47"/>
    </location>
    <ligand>
        <name>ATP</name>
        <dbReference type="ChEBI" id="CHEBI:30616"/>
    </ligand>
</feature>
<sequence>MPIILENVSFFYSKNTPLETAALKDVNLRIEKGEFVGILGEKGAGKSTLIKLFNGLLRPESGKVTVDGLSPFSKEVKRKVGMLFQQAADQLFCRTVHEEIAFGPRNFGYSKKETEERVFEALEAVSFDRSMLLRDPFSLSGGEMQRVALAGALALRPDYLVLDEPITGLDPAGKKEILETLKKIKDQGTAVITVTHNLKGFFPLLEKIVLVREGRISFQGSREEYLEAKNVPLPPVTSMMRELKARGLPVNPAIFTVEEALEEILRVKSRLEKEKTEKWSETD</sequence>
<comment type="function">
    <text evidence="1">Probably part of an ABC transporter complex. Responsible for energy coupling to the transport system (By similarity).</text>
</comment>
<comment type="subcellular location">
    <subcellularLocation>
        <location evidence="1">Cell membrane</location>
        <topology evidence="1">Peripheral membrane protein</topology>
    </subcellularLocation>
</comment>
<comment type="similarity">
    <text evidence="3">Belongs to the ABC transporter superfamily.</text>
</comment>
<proteinExistence type="inferred from homology"/>
<gene>
    <name type="ordered locus">MA_4342</name>
</gene>
<keyword id="KW-0067">ATP-binding</keyword>
<keyword id="KW-1003">Cell membrane</keyword>
<keyword id="KW-0472">Membrane</keyword>
<keyword id="KW-0547">Nucleotide-binding</keyword>
<keyword id="KW-1185">Reference proteome</keyword>
<keyword id="KW-1278">Translocase</keyword>
<keyword id="KW-0813">Transport</keyword>
<reference key="1">
    <citation type="journal article" date="2002" name="Genome Res.">
        <title>The genome of Methanosarcina acetivorans reveals extensive metabolic and physiological diversity.</title>
        <authorList>
            <person name="Galagan J.E."/>
            <person name="Nusbaum C."/>
            <person name="Roy A."/>
            <person name="Endrizzi M.G."/>
            <person name="Macdonald P."/>
            <person name="FitzHugh W."/>
            <person name="Calvo S."/>
            <person name="Engels R."/>
            <person name="Smirnov S."/>
            <person name="Atnoor D."/>
            <person name="Brown A."/>
            <person name="Allen N."/>
            <person name="Naylor J."/>
            <person name="Stange-Thomann N."/>
            <person name="DeArellano K."/>
            <person name="Johnson R."/>
            <person name="Linton L."/>
            <person name="McEwan P."/>
            <person name="McKernan K."/>
            <person name="Talamas J."/>
            <person name="Tirrell A."/>
            <person name="Ye W."/>
            <person name="Zimmer A."/>
            <person name="Barber R.D."/>
            <person name="Cann I."/>
            <person name="Graham D.E."/>
            <person name="Grahame D.A."/>
            <person name="Guss A.M."/>
            <person name="Hedderich R."/>
            <person name="Ingram-Smith C."/>
            <person name="Kuettner H.C."/>
            <person name="Krzycki J.A."/>
            <person name="Leigh J.A."/>
            <person name="Li W."/>
            <person name="Liu J."/>
            <person name="Mukhopadhyay B."/>
            <person name="Reeve J.N."/>
            <person name="Smith K."/>
            <person name="Springer T.A."/>
            <person name="Umayam L.A."/>
            <person name="White O."/>
            <person name="White R.H."/>
            <person name="de Macario E.C."/>
            <person name="Ferry J.G."/>
            <person name="Jarrell K.F."/>
            <person name="Jing H."/>
            <person name="Macario A.J.L."/>
            <person name="Paulsen I.T."/>
            <person name="Pritchett M."/>
            <person name="Sowers K.R."/>
            <person name="Swanson R.V."/>
            <person name="Zinder S.H."/>
            <person name="Lander E."/>
            <person name="Metcalf W.W."/>
            <person name="Birren B."/>
        </authorList>
    </citation>
    <scope>NUCLEOTIDE SEQUENCE [LARGE SCALE GENOMIC DNA]</scope>
    <source>
        <strain>ATCC 35395 / DSM 2834 / JCM 12185 / C2A</strain>
    </source>
</reference>
<dbReference type="EC" id="7.-.-.-"/>
<dbReference type="EMBL" id="AE010299">
    <property type="protein sequence ID" value="AAM07685.1"/>
    <property type="molecule type" value="Genomic_DNA"/>
</dbReference>
<dbReference type="RefSeq" id="WP_011024222.1">
    <property type="nucleotide sequence ID" value="NC_003552.1"/>
</dbReference>
<dbReference type="SMR" id="Q8TI15"/>
<dbReference type="STRING" id="188937.MA_4342"/>
<dbReference type="EnsemblBacteria" id="AAM07685">
    <property type="protein sequence ID" value="AAM07685"/>
    <property type="gene ID" value="MA_4342"/>
</dbReference>
<dbReference type="GeneID" id="1476236"/>
<dbReference type="KEGG" id="mac:MA_4342"/>
<dbReference type="HOGENOM" id="CLU_000604_1_22_2"/>
<dbReference type="InParanoid" id="Q8TI15"/>
<dbReference type="OrthoDB" id="35850at2157"/>
<dbReference type="PhylomeDB" id="Q8TI15"/>
<dbReference type="Proteomes" id="UP000002487">
    <property type="component" value="Chromosome"/>
</dbReference>
<dbReference type="GO" id="GO:0043190">
    <property type="term" value="C:ATP-binding cassette (ABC) transporter complex"/>
    <property type="evidence" value="ECO:0000318"/>
    <property type="project" value="GO_Central"/>
</dbReference>
<dbReference type="GO" id="GO:0005524">
    <property type="term" value="F:ATP binding"/>
    <property type="evidence" value="ECO:0000318"/>
    <property type="project" value="GO_Central"/>
</dbReference>
<dbReference type="GO" id="GO:0016887">
    <property type="term" value="F:ATP hydrolysis activity"/>
    <property type="evidence" value="ECO:0007669"/>
    <property type="project" value="InterPro"/>
</dbReference>
<dbReference type="GO" id="GO:0042626">
    <property type="term" value="F:ATPase-coupled transmembrane transporter activity"/>
    <property type="evidence" value="ECO:0000318"/>
    <property type="project" value="GO_Central"/>
</dbReference>
<dbReference type="CDD" id="cd03225">
    <property type="entry name" value="ABC_cobalt_CbiO_domain1"/>
    <property type="match status" value="1"/>
</dbReference>
<dbReference type="FunFam" id="3.40.50.300:FF:003227">
    <property type="entry name" value="ATPase component BioM of energizing module of biotin ECF transporter"/>
    <property type="match status" value="1"/>
</dbReference>
<dbReference type="Gene3D" id="3.40.50.300">
    <property type="entry name" value="P-loop containing nucleotide triphosphate hydrolases"/>
    <property type="match status" value="1"/>
</dbReference>
<dbReference type="InterPro" id="IPR003593">
    <property type="entry name" value="AAA+_ATPase"/>
</dbReference>
<dbReference type="InterPro" id="IPR003439">
    <property type="entry name" value="ABC_transporter-like_ATP-bd"/>
</dbReference>
<dbReference type="InterPro" id="IPR017871">
    <property type="entry name" value="ABC_transporter-like_CS"/>
</dbReference>
<dbReference type="InterPro" id="IPR015856">
    <property type="entry name" value="ABC_transpr_CbiO/EcfA_su"/>
</dbReference>
<dbReference type="InterPro" id="IPR050095">
    <property type="entry name" value="ECF_ABC_transporter_ATP-bd"/>
</dbReference>
<dbReference type="InterPro" id="IPR027417">
    <property type="entry name" value="P-loop_NTPase"/>
</dbReference>
<dbReference type="PANTHER" id="PTHR43553:SF24">
    <property type="entry name" value="ENERGY-COUPLING FACTOR TRANSPORTER ATP-BINDING PROTEIN ECFA1"/>
    <property type="match status" value="1"/>
</dbReference>
<dbReference type="PANTHER" id="PTHR43553">
    <property type="entry name" value="HEAVY METAL TRANSPORTER"/>
    <property type="match status" value="1"/>
</dbReference>
<dbReference type="Pfam" id="PF00005">
    <property type="entry name" value="ABC_tran"/>
    <property type="match status" value="1"/>
</dbReference>
<dbReference type="SMART" id="SM00382">
    <property type="entry name" value="AAA"/>
    <property type="match status" value="1"/>
</dbReference>
<dbReference type="SUPFAM" id="SSF52540">
    <property type="entry name" value="P-loop containing nucleoside triphosphate hydrolases"/>
    <property type="match status" value="1"/>
</dbReference>
<dbReference type="PROSITE" id="PS00211">
    <property type="entry name" value="ABC_TRANSPORTER_1"/>
    <property type="match status" value="1"/>
</dbReference>
<dbReference type="PROSITE" id="PS50893">
    <property type="entry name" value="ABC_TRANSPORTER_2"/>
    <property type="match status" value="1"/>
</dbReference>
<name>Y4342_METAC</name>
<organism>
    <name type="scientific">Methanosarcina acetivorans (strain ATCC 35395 / DSM 2834 / JCM 12185 / C2A)</name>
    <dbReference type="NCBI Taxonomy" id="188937"/>
    <lineage>
        <taxon>Archaea</taxon>
        <taxon>Methanobacteriati</taxon>
        <taxon>Methanobacteriota</taxon>
        <taxon>Stenosarchaea group</taxon>
        <taxon>Methanomicrobia</taxon>
        <taxon>Methanosarcinales</taxon>
        <taxon>Methanosarcinaceae</taxon>
        <taxon>Methanosarcina</taxon>
    </lineage>
</organism>
<evidence type="ECO:0000250" key="1"/>
<evidence type="ECO:0000255" key="2">
    <source>
        <dbReference type="PROSITE-ProRule" id="PRU00434"/>
    </source>
</evidence>
<evidence type="ECO:0000305" key="3"/>
<accession>Q8TI15</accession>
<protein>
    <recommendedName>
        <fullName>Putative ABC transporter ATP-binding protein MA_4342</fullName>
        <ecNumber>7.-.-.-</ecNumber>
    </recommendedName>
</protein>